<feature type="chain" id="PRO_0000246099" description="Probable Fe(2+)-trafficking protein">
    <location>
        <begin position="1"/>
        <end position="90"/>
    </location>
</feature>
<name>FETP_DECAR</name>
<evidence type="ECO:0000255" key="1">
    <source>
        <dbReference type="HAMAP-Rule" id="MF_00686"/>
    </source>
</evidence>
<accession>Q47A19</accession>
<comment type="function">
    <text evidence="1">Could be a mediator in iron transactions between iron acquisition and iron-requiring processes, such as synthesis and/or repair of Fe-S clusters in biosynthetic enzymes.</text>
</comment>
<comment type="similarity">
    <text evidence="1">Belongs to the Fe(2+)-trafficking protein family.</text>
</comment>
<dbReference type="EMBL" id="CP000089">
    <property type="protein sequence ID" value="AAZ48312.1"/>
    <property type="molecule type" value="Genomic_DNA"/>
</dbReference>
<dbReference type="SMR" id="Q47A19"/>
<dbReference type="STRING" id="159087.Daro_3583"/>
<dbReference type="KEGG" id="dar:Daro_3583"/>
<dbReference type="eggNOG" id="COG2924">
    <property type="taxonomic scope" value="Bacteria"/>
</dbReference>
<dbReference type="HOGENOM" id="CLU_170994_0_0_4"/>
<dbReference type="OrthoDB" id="9804318at2"/>
<dbReference type="GO" id="GO:0005829">
    <property type="term" value="C:cytosol"/>
    <property type="evidence" value="ECO:0007669"/>
    <property type="project" value="TreeGrafter"/>
</dbReference>
<dbReference type="GO" id="GO:0005506">
    <property type="term" value="F:iron ion binding"/>
    <property type="evidence" value="ECO:0007669"/>
    <property type="project" value="UniProtKB-UniRule"/>
</dbReference>
<dbReference type="GO" id="GO:0034599">
    <property type="term" value="P:cellular response to oxidative stress"/>
    <property type="evidence" value="ECO:0007669"/>
    <property type="project" value="TreeGrafter"/>
</dbReference>
<dbReference type="FunFam" id="1.10.3880.10:FF:000001">
    <property type="entry name" value="Probable Fe(2+)-trafficking protein"/>
    <property type="match status" value="1"/>
</dbReference>
<dbReference type="Gene3D" id="1.10.3880.10">
    <property type="entry name" value="Fe(II) trafficking protein YggX"/>
    <property type="match status" value="1"/>
</dbReference>
<dbReference type="HAMAP" id="MF_00686">
    <property type="entry name" value="Fe_traffic_YggX"/>
    <property type="match status" value="1"/>
</dbReference>
<dbReference type="InterPro" id="IPR007457">
    <property type="entry name" value="Fe_traffick_prot_YggX"/>
</dbReference>
<dbReference type="InterPro" id="IPR036766">
    <property type="entry name" value="Fe_traffick_prot_YggX_sf"/>
</dbReference>
<dbReference type="NCBIfam" id="NF003817">
    <property type="entry name" value="PRK05408.1"/>
    <property type="match status" value="1"/>
</dbReference>
<dbReference type="PANTHER" id="PTHR36965">
    <property type="entry name" value="FE(2+)-TRAFFICKING PROTEIN-RELATED"/>
    <property type="match status" value="1"/>
</dbReference>
<dbReference type="PANTHER" id="PTHR36965:SF1">
    <property type="entry name" value="FE(2+)-TRAFFICKING PROTEIN-RELATED"/>
    <property type="match status" value="1"/>
</dbReference>
<dbReference type="Pfam" id="PF04362">
    <property type="entry name" value="Iron_traffic"/>
    <property type="match status" value="1"/>
</dbReference>
<dbReference type="PIRSF" id="PIRSF029827">
    <property type="entry name" value="Fe_traffic_YggX"/>
    <property type="match status" value="1"/>
</dbReference>
<dbReference type="SUPFAM" id="SSF111148">
    <property type="entry name" value="YggX-like"/>
    <property type="match status" value="1"/>
</dbReference>
<sequence>MARTVNCIKLGREAEGLDFPPYPGPLGQRIFEHVSKEAWQQWIKMQTMIINENRLNLVDAKHRKYLAEQVEKHFFGEGADQIQGYVPPAA</sequence>
<proteinExistence type="inferred from homology"/>
<reference key="1">
    <citation type="journal article" date="2009" name="BMC Genomics">
        <title>Metabolic analysis of the soil microbe Dechloromonas aromatica str. RCB: indications of a surprisingly complex life-style and cryptic anaerobic pathways for aromatic degradation.</title>
        <authorList>
            <person name="Salinero K.K."/>
            <person name="Keller K."/>
            <person name="Feil W.S."/>
            <person name="Feil H."/>
            <person name="Trong S."/>
            <person name="Di Bartolo G."/>
            <person name="Lapidus A."/>
        </authorList>
    </citation>
    <scope>NUCLEOTIDE SEQUENCE [LARGE SCALE GENOMIC DNA]</scope>
    <source>
        <strain>RCB</strain>
    </source>
</reference>
<organism>
    <name type="scientific">Dechloromonas aromatica (strain RCB)</name>
    <dbReference type="NCBI Taxonomy" id="159087"/>
    <lineage>
        <taxon>Bacteria</taxon>
        <taxon>Pseudomonadati</taxon>
        <taxon>Pseudomonadota</taxon>
        <taxon>Betaproteobacteria</taxon>
        <taxon>Rhodocyclales</taxon>
        <taxon>Azonexaceae</taxon>
        <taxon>Dechloromonas</taxon>
    </lineage>
</organism>
<keyword id="KW-0408">Iron</keyword>
<gene>
    <name type="ordered locus">Daro_3583</name>
</gene>
<protein>
    <recommendedName>
        <fullName evidence="1">Probable Fe(2+)-trafficking protein</fullName>
    </recommendedName>
</protein>